<proteinExistence type="inferred from homology"/>
<evidence type="ECO:0000255" key="1">
    <source>
        <dbReference type="HAMAP-Rule" id="MF_01077"/>
    </source>
</evidence>
<dbReference type="EMBL" id="BX640446">
    <property type="protein sequence ID" value="CAE33740.1"/>
    <property type="molecule type" value="Genomic_DNA"/>
</dbReference>
<dbReference type="RefSeq" id="WP_003810544.1">
    <property type="nucleotide sequence ID" value="NC_002927.3"/>
</dbReference>
<dbReference type="SMR" id="Q7WHG0"/>
<dbReference type="GeneID" id="69601162"/>
<dbReference type="KEGG" id="bbr:BB3248"/>
<dbReference type="eggNOG" id="COG0779">
    <property type="taxonomic scope" value="Bacteria"/>
</dbReference>
<dbReference type="HOGENOM" id="CLU_070525_1_0_4"/>
<dbReference type="Proteomes" id="UP000001027">
    <property type="component" value="Chromosome"/>
</dbReference>
<dbReference type="GO" id="GO:0005829">
    <property type="term" value="C:cytosol"/>
    <property type="evidence" value="ECO:0007669"/>
    <property type="project" value="TreeGrafter"/>
</dbReference>
<dbReference type="GO" id="GO:0000028">
    <property type="term" value="P:ribosomal small subunit assembly"/>
    <property type="evidence" value="ECO:0007669"/>
    <property type="project" value="TreeGrafter"/>
</dbReference>
<dbReference type="GO" id="GO:0006412">
    <property type="term" value="P:translation"/>
    <property type="evidence" value="ECO:0007669"/>
    <property type="project" value="TreeGrafter"/>
</dbReference>
<dbReference type="CDD" id="cd01734">
    <property type="entry name" value="YlxS_C"/>
    <property type="match status" value="1"/>
</dbReference>
<dbReference type="Gene3D" id="2.30.30.180">
    <property type="entry name" value="Ribosome maturation factor RimP, C-terminal domain"/>
    <property type="match status" value="1"/>
</dbReference>
<dbReference type="Gene3D" id="3.30.300.70">
    <property type="entry name" value="RimP-like superfamily, N-terminal"/>
    <property type="match status" value="1"/>
</dbReference>
<dbReference type="HAMAP" id="MF_01077">
    <property type="entry name" value="RimP"/>
    <property type="match status" value="1"/>
</dbReference>
<dbReference type="InterPro" id="IPR003728">
    <property type="entry name" value="Ribosome_maturation_RimP"/>
</dbReference>
<dbReference type="InterPro" id="IPR028998">
    <property type="entry name" value="RimP_C"/>
</dbReference>
<dbReference type="InterPro" id="IPR036847">
    <property type="entry name" value="RimP_C_sf"/>
</dbReference>
<dbReference type="InterPro" id="IPR028989">
    <property type="entry name" value="RimP_N"/>
</dbReference>
<dbReference type="InterPro" id="IPR035956">
    <property type="entry name" value="RimP_N_sf"/>
</dbReference>
<dbReference type="NCBIfam" id="NF000929">
    <property type="entry name" value="PRK00092.2-1"/>
    <property type="match status" value="1"/>
</dbReference>
<dbReference type="PANTHER" id="PTHR33867">
    <property type="entry name" value="RIBOSOME MATURATION FACTOR RIMP"/>
    <property type="match status" value="1"/>
</dbReference>
<dbReference type="PANTHER" id="PTHR33867:SF1">
    <property type="entry name" value="RIBOSOME MATURATION FACTOR RIMP"/>
    <property type="match status" value="1"/>
</dbReference>
<dbReference type="Pfam" id="PF17384">
    <property type="entry name" value="DUF150_C"/>
    <property type="match status" value="1"/>
</dbReference>
<dbReference type="Pfam" id="PF02576">
    <property type="entry name" value="RimP_N"/>
    <property type="match status" value="1"/>
</dbReference>
<dbReference type="SUPFAM" id="SSF74942">
    <property type="entry name" value="YhbC-like, C-terminal domain"/>
    <property type="match status" value="1"/>
</dbReference>
<dbReference type="SUPFAM" id="SSF75420">
    <property type="entry name" value="YhbC-like, N-terminal domain"/>
    <property type="match status" value="1"/>
</dbReference>
<feature type="chain" id="PRO_0000181849" description="Ribosome maturation factor RimP">
    <location>
        <begin position="1"/>
        <end position="168"/>
    </location>
</feature>
<protein>
    <recommendedName>
        <fullName evidence="1">Ribosome maturation factor RimP</fullName>
    </recommendedName>
</protein>
<reference key="1">
    <citation type="journal article" date="2003" name="Nat. Genet.">
        <title>Comparative analysis of the genome sequences of Bordetella pertussis, Bordetella parapertussis and Bordetella bronchiseptica.</title>
        <authorList>
            <person name="Parkhill J."/>
            <person name="Sebaihia M."/>
            <person name="Preston A."/>
            <person name="Murphy L.D."/>
            <person name="Thomson N.R."/>
            <person name="Harris D.E."/>
            <person name="Holden M.T.G."/>
            <person name="Churcher C.M."/>
            <person name="Bentley S.D."/>
            <person name="Mungall K.L."/>
            <person name="Cerdeno-Tarraga A.-M."/>
            <person name="Temple L."/>
            <person name="James K.D."/>
            <person name="Harris B."/>
            <person name="Quail M.A."/>
            <person name="Achtman M."/>
            <person name="Atkin R."/>
            <person name="Baker S."/>
            <person name="Basham D."/>
            <person name="Bason N."/>
            <person name="Cherevach I."/>
            <person name="Chillingworth T."/>
            <person name="Collins M."/>
            <person name="Cronin A."/>
            <person name="Davis P."/>
            <person name="Doggett J."/>
            <person name="Feltwell T."/>
            <person name="Goble A."/>
            <person name="Hamlin N."/>
            <person name="Hauser H."/>
            <person name="Holroyd S."/>
            <person name="Jagels K."/>
            <person name="Leather S."/>
            <person name="Moule S."/>
            <person name="Norberczak H."/>
            <person name="O'Neil S."/>
            <person name="Ormond D."/>
            <person name="Price C."/>
            <person name="Rabbinowitsch E."/>
            <person name="Rutter S."/>
            <person name="Sanders M."/>
            <person name="Saunders D."/>
            <person name="Seeger K."/>
            <person name="Sharp S."/>
            <person name="Simmonds M."/>
            <person name="Skelton J."/>
            <person name="Squares R."/>
            <person name="Squares S."/>
            <person name="Stevens K."/>
            <person name="Unwin L."/>
            <person name="Whitehead S."/>
            <person name="Barrell B.G."/>
            <person name="Maskell D.J."/>
        </authorList>
    </citation>
    <scope>NUCLEOTIDE SEQUENCE [LARGE SCALE GENOMIC DNA]</scope>
    <source>
        <strain>ATCC BAA-588 / NCTC 13252 / RB50</strain>
    </source>
</reference>
<name>RIMP_BORBR</name>
<keyword id="KW-0963">Cytoplasm</keyword>
<keyword id="KW-0690">Ribosome biogenesis</keyword>
<accession>Q7WHG0</accession>
<gene>
    <name evidence="1" type="primary">rimP</name>
    <name type="ordered locus">BB3248</name>
</gene>
<sequence length="168" mass="18731">MADLFALTEEALAGMDIELVDVERAAMGLLRVTIDRVDGVRIEDCEQVSRQLSRVYEVENIDYKRLEVGSPGVDRPLRNEAEFRRFAGERIEIKLREALDGRKVFSGTLRAPEADGASGQDDTAGAGKAVFGLEFEAKKNDIQVLSFTLDDIERAKLDPVLDFKGKKR</sequence>
<organism>
    <name type="scientific">Bordetella bronchiseptica (strain ATCC BAA-588 / NCTC 13252 / RB50)</name>
    <name type="common">Alcaligenes bronchisepticus</name>
    <dbReference type="NCBI Taxonomy" id="257310"/>
    <lineage>
        <taxon>Bacteria</taxon>
        <taxon>Pseudomonadati</taxon>
        <taxon>Pseudomonadota</taxon>
        <taxon>Betaproteobacteria</taxon>
        <taxon>Burkholderiales</taxon>
        <taxon>Alcaligenaceae</taxon>
        <taxon>Bordetella</taxon>
    </lineage>
</organism>
<comment type="function">
    <text evidence="1">Required for maturation of 30S ribosomal subunits.</text>
</comment>
<comment type="subcellular location">
    <subcellularLocation>
        <location evidence="1">Cytoplasm</location>
    </subcellularLocation>
</comment>
<comment type="similarity">
    <text evidence="1">Belongs to the RimP family.</text>
</comment>